<reference key="1">
    <citation type="journal article" date="2011" name="J. Bacteriol.">
        <title>Comparative genomics of 28 Salmonella enterica isolates: evidence for CRISPR-mediated adaptive sublineage evolution.</title>
        <authorList>
            <person name="Fricke W.F."/>
            <person name="Mammel M.K."/>
            <person name="McDermott P.F."/>
            <person name="Tartera C."/>
            <person name="White D.G."/>
            <person name="Leclerc J.E."/>
            <person name="Ravel J."/>
            <person name="Cebula T.A."/>
        </authorList>
    </citation>
    <scope>NUCLEOTIDE SEQUENCE [LARGE SCALE GENOMIC DNA]</scope>
    <source>
        <strain>SL476</strain>
    </source>
</reference>
<comment type="function">
    <text evidence="1">Binds to the 23S rRNA.</text>
</comment>
<comment type="similarity">
    <text evidence="1">Belongs to the bacterial ribosomal protein bL9 family.</text>
</comment>
<keyword id="KW-0687">Ribonucleoprotein</keyword>
<keyword id="KW-0689">Ribosomal protein</keyword>
<keyword id="KW-0694">RNA-binding</keyword>
<keyword id="KW-0699">rRNA-binding</keyword>
<protein>
    <recommendedName>
        <fullName evidence="1">Large ribosomal subunit protein bL9</fullName>
    </recommendedName>
    <alternativeName>
        <fullName evidence="2">50S ribosomal protein L9</fullName>
    </alternativeName>
</protein>
<sequence>MQVILLDKVANLGSLGDQVNVKAGYARNFLVPKGKAVPATKKNVEYFEARRAELEAKLADVLAAANARAEKINALETVTIASKAGDEGKLFGSIGTRDIADAVTAAGVDVAKSEVRLPNGVLRTTGEHEVNFQVHSEVFAKVIINVVAE</sequence>
<feature type="chain" id="PRO_1000126967" description="Large ribosomal subunit protein bL9">
    <location>
        <begin position="1"/>
        <end position="149"/>
    </location>
</feature>
<organism>
    <name type="scientific">Salmonella heidelberg (strain SL476)</name>
    <dbReference type="NCBI Taxonomy" id="454169"/>
    <lineage>
        <taxon>Bacteria</taxon>
        <taxon>Pseudomonadati</taxon>
        <taxon>Pseudomonadota</taxon>
        <taxon>Gammaproteobacteria</taxon>
        <taxon>Enterobacterales</taxon>
        <taxon>Enterobacteriaceae</taxon>
        <taxon>Salmonella</taxon>
    </lineage>
</organism>
<gene>
    <name evidence="1" type="primary">rplI</name>
    <name type="ordered locus">SeHA_C4812</name>
</gene>
<proteinExistence type="inferred from homology"/>
<accession>B4TFD8</accession>
<dbReference type="EMBL" id="CP001120">
    <property type="protein sequence ID" value="ACF68457.1"/>
    <property type="molecule type" value="Genomic_DNA"/>
</dbReference>
<dbReference type="RefSeq" id="WP_001196059.1">
    <property type="nucleotide sequence ID" value="NC_011083.1"/>
</dbReference>
<dbReference type="SMR" id="B4TFD8"/>
<dbReference type="KEGG" id="seh:SeHA_C4812"/>
<dbReference type="HOGENOM" id="CLU_078938_4_1_6"/>
<dbReference type="Proteomes" id="UP000001866">
    <property type="component" value="Chromosome"/>
</dbReference>
<dbReference type="GO" id="GO:1990904">
    <property type="term" value="C:ribonucleoprotein complex"/>
    <property type="evidence" value="ECO:0007669"/>
    <property type="project" value="UniProtKB-KW"/>
</dbReference>
<dbReference type="GO" id="GO:0005840">
    <property type="term" value="C:ribosome"/>
    <property type="evidence" value="ECO:0007669"/>
    <property type="project" value="UniProtKB-KW"/>
</dbReference>
<dbReference type="GO" id="GO:0019843">
    <property type="term" value="F:rRNA binding"/>
    <property type="evidence" value="ECO:0007669"/>
    <property type="project" value="UniProtKB-UniRule"/>
</dbReference>
<dbReference type="GO" id="GO:0003735">
    <property type="term" value="F:structural constituent of ribosome"/>
    <property type="evidence" value="ECO:0007669"/>
    <property type="project" value="InterPro"/>
</dbReference>
<dbReference type="GO" id="GO:0006412">
    <property type="term" value="P:translation"/>
    <property type="evidence" value="ECO:0007669"/>
    <property type="project" value="UniProtKB-UniRule"/>
</dbReference>
<dbReference type="FunFam" id="3.10.430.100:FF:000001">
    <property type="entry name" value="50S ribosomal protein L9"/>
    <property type="match status" value="1"/>
</dbReference>
<dbReference type="FunFam" id="3.40.5.10:FF:000001">
    <property type="entry name" value="50S ribosomal protein L9"/>
    <property type="match status" value="1"/>
</dbReference>
<dbReference type="Gene3D" id="3.10.430.100">
    <property type="entry name" value="Ribosomal protein L9, C-terminal domain"/>
    <property type="match status" value="1"/>
</dbReference>
<dbReference type="Gene3D" id="3.40.5.10">
    <property type="entry name" value="Ribosomal protein L9, N-terminal domain"/>
    <property type="match status" value="1"/>
</dbReference>
<dbReference type="HAMAP" id="MF_00503">
    <property type="entry name" value="Ribosomal_bL9"/>
    <property type="match status" value="1"/>
</dbReference>
<dbReference type="InterPro" id="IPR000244">
    <property type="entry name" value="Ribosomal_bL9"/>
</dbReference>
<dbReference type="InterPro" id="IPR009027">
    <property type="entry name" value="Ribosomal_bL9/RNase_H1_N"/>
</dbReference>
<dbReference type="InterPro" id="IPR020594">
    <property type="entry name" value="Ribosomal_bL9_bac/chp"/>
</dbReference>
<dbReference type="InterPro" id="IPR020069">
    <property type="entry name" value="Ribosomal_bL9_C"/>
</dbReference>
<dbReference type="InterPro" id="IPR036791">
    <property type="entry name" value="Ribosomal_bL9_C_sf"/>
</dbReference>
<dbReference type="InterPro" id="IPR020070">
    <property type="entry name" value="Ribosomal_bL9_N"/>
</dbReference>
<dbReference type="InterPro" id="IPR036935">
    <property type="entry name" value="Ribosomal_bL9_N_sf"/>
</dbReference>
<dbReference type="NCBIfam" id="TIGR00158">
    <property type="entry name" value="L9"/>
    <property type="match status" value="1"/>
</dbReference>
<dbReference type="PANTHER" id="PTHR21368">
    <property type="entry name" value="50S RIBOSOMAL PROTEIN L9"/>
    <property type="match status" value="1"/>
</dbReference>
<dbReference type="Pfam" id="PF03948">
    <property type="entry name" value="Ribosomal_L9_C"/>
    <property type="match status" value="1"/>
</dbReference>
<dbReference type="Pfam" id="PF01281">
    <property type="entry name" value="Ribosomal_L9_N"/>
    <property type="match status" value="1"/>
</dbReference>
<dbReference type="SUPFAM" id="SSF55658">
    <property type="entry name" value="L9 N-domain-like"/>
    <property type="match status" value="1"/>
</dbReference>
<dbReference type="SUPFAM" id="SSF55653">
    <property type="entry name" value="Ribosomal protein L9 C-domain"/>
    <property type="match status" value="1"/>
</dbReference>
<dbReference type="PROSITE" id="PS00651">
    <property type="entry name" value="RIBOSOMAL_L9"/>
    <property type="match status" value="1"/>
</dbReference>
<name>RL9_SALHS</name>
<evidence type="ECO:0000255" key="1">
    <source>
        <dbReference type="HAMAP-Rule" id="MF_00503"/>
    </source>
</evidence>
<evidence type="ECO:0000305" key="2"/>